<feature type="transit peptide" description="Chloroplast and mitochondrion" evidence="7">
    <location>
        <begin position="1"/>
        <end status="unknown"/>
    </location>
</feature>
<feature type="chain" id="PRO_0000433540" description="Lysine--tRNA ligase, chloroplastic/mitochondrial" evidence="7">
    <location>
        <begin status="unknown"/>
        <end position="602"/>
    </location>
</feature>
<feature type="DNA-binding region" description="OB" evidence="2">
    <location>
        <begin position="136"/>
        <end position="214"/>
    </location>
</feature>
<feature type="region of interest" description="Disordered" evidence="3">
    <location>
        <begin position="50"/>
        <end position="83"/>
    </location>
</feature>
<feature type="region of interest" description="Disordered" evidence="3">
    <location>
        <begin position="524"/>
        <end position="550"/>
    </location>
</feature>
<feature type="compositionally biased region" description="Low complexity" evidence="3">
    <location>
        <begin position="50"/>
        <end position="62"/>
    </location>
</feature>
<feature type="compositionally biased region" description="Basic and acidic residues" evidence="3">
    <location>
        <begin position="524"/>
        <end position="543"/>
    </location>
</feature>
<feature type="binding site" evidence="1">
    <location>
        <position position="285"/>
    </location>
    <ligand>
        <name>substrate</name>
    </ligand>
</feature>
<feature type="binding site" evidence="1">
    <location>
        <position position="309"/>
    </location>
    <ligand>
        <name>substrate</name>
    </ligand>
</feature>
<feature type="binding site" evidence="1">
    <location>
        <begin position="331"/>
        <end position="333"/>
    </location>
    <ligand>
        <name>ATP</name>
        <dbReference type="ChEBI" id="CHEBI:30616"/>
    </ligand>
</feature>
<feature type="binding site" evidence="1">
    <location>
        <begin position="339"/>
        <end position="340"/>
    </location>
    <ligand>
        <name>ATP</name>
        <dbReference type="ChEBI" id="CHEBI:30616"/>
    </ligand>
</feature>
<feature type="binding site" evidence="1">
    <location>
        <position position="347"/>
    </location>
    <ligand>
        <name>substrate</name>
    </ligand>
</feature>
<feature type="binding site" evidence="1">
    <location>
        <position position="349"/>
    </location>
    <ligand>
        <name>substrate</name>
    </ligand>
</feature>
<feature type="binding site" evidence="1">
    <location>
        <position position="492"/>
    </location>
    <ligand>
        <name>Ca(2+)</name>
        <dbReference type="ChEBI" id="CHEBI:29108"/>
    </ligand>
</feature>
<feature type="binding site" evidence="1">
    <location>
        <begin position="499"/>
        <end position="500"/>
    </location>
    <ligand>
        <name>ATP</name>
        <dbReference type="ChEBI" id="CHEBI:30616"/>
    </ligand>
</feature>
<feature type="binding site" evidence="1">
    <location>
        <position position="499"/>
    </location>
    <ligand>
        <name>Ca(2+)</name>
        <dbReference type="ChEBI" id="CHEBI:29108"/>
    </ligand>
</feature>
<feature type="binding site" evidence="1">
    <location>
        <position position="502"/>
    </location>
    <ligand>
        <name>substrate</name>
    </ligand>
</feature>
<feature type="binding site" evidence="1">
    <location>
        <position position="506"/>
    </location>
    <ligand>
        <name>substrate</name>
    </ligand>
</feature>
<feature type="binding site" evidence="1">
    <location>
        <begin position="575"/>
        <end position="578"/>
    </location>
    <ligand>
        <name>ATP</name>
        <dbReference type="ChEBI" id="CHEBI:30616"/>
    </ligand>
</feature>
<protein>
    <recommendedName>
        <fullName evidence="7">Lysine--tRNA ligase, chloroplastic/mitochondrial</fullName>
        <ecNumber evidence="7">6.1.1.6</ecNumber>
    </recommendedName>
    <alternativeName>
        <fullName evidence="7">Lysyl-tRNA synthetase</fullName>
        <shortName evidence="7">LysRS</shortName>
    </alternativeName>
    <alternativeName>
        <fullName evidence="7">Lysyl-tRNA synthetase 2</fullName>
        <shortName evidence="7">AtKRS-2</shortName>
    </alternativeName>
    <alternativeName>
        <fullName evidence="6">Protein OVULE ABORTION 5</fullName>
    </alternativeName>
</protein>
<accession>Q9LJE2</accession>
<evidence type="ECO:0000250" key="1">
    <source>
        <dbReference type="UniProtKB" id="Q15046"/>
    </source>
</evidence>
<evidence type="ECO:0000255" key="2"/>
<evidence type="ECO:0000256" key="3">
    <source>
        <dbReference type="SAM" id="MobiDB-lite"/>
    </source>
</evidence>
<evidence type="ECO:0000269" key="4">
    <source>
    </source>
</evidence>
<evidence type="ECO:0000269" key="5">
    <source>
    </source>
</evidence>
<evidence type="ECO:0000303" key="6">
    <source>
    </source>
</evidence>
<evidence type="ECO:0000305" key="7"/>
<evidence type="ECO:0000312" key="8">
    <source>
        <dbReference type="Araport" id="AT3G13490"/>
    </source>
</evidence>
<reference key="1">
    <citation type="journal article" date="2000" name="DNA Res.">
        <title>Structural analysis of Arabidopsis thaliana chromosome 3. II. Sequence features of the 4,251,695 bp regions covered by 90 P1, TAC and BAC clones.</title>
        <authorList>
            <person name="Kaneko T."/>
            <person name="Katoh T."/>
            <person name="Sato S."/>
            <person name="Nakamura Y."/>
            <person name="Asamizu E."/>
            <person name="Tabata S."/>
        </authorList>
    </citation>
    <scope>NUCLEOTIDE SEQUENCE [LARGE SCALE GENOMIC DNA]</scope>
    <source>
        <strain>cv. Columbia</strain>
    </source>
</reference>
<reference key="2">
    <citation type="journal article" date="2017" name="Plant J.">
        <title>Araport11: a complete reannotation of the Arabidopsis thaliana reference genome.</title>
        <authorList>
            <person name="Cheng C.Y."/>
            <person name="Krishnakumar V."/>
            <person name="Chan A.P."/>
            <person name="Thibaud-Nissen F."/>
            <person name="Schobel S."/>
            <person name="Town C.D."/>
        </authorList>
    </citation>
    <scope>GENOME REANNOTATION</scope>
    <source>
        <strain>cv. Columbia</strain>
    </source>
</reference>
<reference key="3">
    <citation type="journal article" date="2003" name="Science">
        <title>Empirical analysis of transcriptional activity in the Arabidopsis genome.</title>
        <authorList>
            <person name="Yamada K."/>
            <person name="Lim J."/>
            <person name="Dale J.M."/>
            <person name="Chen H."/>
            <person name="Shinn P."/>
            <person name="Palm C.J."/>
            <person name="Southwick A.M."/>
            <person name="Wu H.C."/>
            <person name="Kim C.J."/>
            <person name="Nguyen M."/>
            <person name="Pham P.K."/>
            <person name="Cheuk R.F."/>
            <person name="Karlin-Newmann G."/>
            <person name="Liu S.X."/>
            <person name="Lam B."/>
            <person name="Sakano H."/>
            <person name="Wu T."/>
            <person name="Yu G."/>
            <person name="Miranda M."/>
            <person name="Quach H.L."/>
            <person name="Tripp M."/>
            <person name="Chang C.H."/>
            <person name="Lee J.M."/>
            <person name="Toriumi M.J."/>
            <person name="Chan M.M."/>
            <person name="Tang C.C."/>
            <person name="Onodera C.S."/>
            <person name="Deng J.M."/>
            <person name="Akiyama K."/>
            <person name="Ansari Y."/>
            <person name="Arakawa T."/>
            <person name="Banh J."/>
            <person name="Banno F."/>
            <person name="Bowser L."/>
            <person name="Brooks S.Y."/>
            <person name="Carninci P."/>
            <person name="Chao Q."/>
            <person name="Choy N."/>
            <person name="Enju A."/>
            <person name="Goldsmith A.D."/>
            <person name="Gurjal M."/>
            <person name="Hansen N.F."/>
            <person name="Hayashizaki Y."/>
            <person name="Johnson-Hopson C."/>
            <person name="Hsuan V.W."/>
            <person name="Iida K."/>
            <person name="Karnes M."/>
            <person name="Khan S."/>
            <person name="Koesema E."/>
            <person name="Ishida J."/>
            <person name="Jiang P.X."/>
            <person name="Jones T."/>
            <person name="Kawai J."/>
            <person name="Kamiya A."/>
            <person name="Meyers C."/>
            <person name="Nakajima M."/>
            <person name="Narusaka M."/>
            <person name="Seki M."/>
            <person name="Sakurai T."/>
            <person name="Satou M."/>
            <person name="Tamse R."/>
            <person name="Vaysberg M."/>
            <person name="Wallender E.K."/>
            <person name="Wong C."/>
            <person name="Yamamura Y."/>
            <person name="Yuan S."/>
            <person name="Shinozaki K."/>
            <person name="Davis R.W."/>
            <person name="Theologis A."/>
            <person name="Ecker J.R."/>
        </authorList>
    </citation>
    <scope>NUCLEOTIDE SEQUENCE [LARGE SCALE MRNA]</scope>
    <source>
        <strain>cv. Columbia</strain>
    </source>
</reference>
<reference key="4">
    <citation type="journal article" date="2005" name="Plant J.">
        <title>Requirement of aminoacyl-tRNA synthetases for gametogenesis and embryo development in Arabidopsis.</title>
        <authorList>
            <person name="Berg M."/>
            <person name="Rogers R."/>
            <person name="Muralla R."/>
            <person name="Meinke D."/>
        </authorList>
    </citation>
    <scope>DISRUPTION PHENOTYPE</scope>
</reference>
<reference key="5">
    <citation type="journal article" date="2005" name="Proc. Natl. Acad. Sci. U.S.A.">
        <title>Dual targeting is the rule for organellar aminoacyl-tRNA synthetases in Arabidopsis thaliana.</title>
        <authorList>
            <person name="Duchene A.-M."/>
            <person name="Giritch A."/>
            <person name="Hoffmann B."/>
            <person name="Cognat V."/>
            <person name="Lancelin D."/>
            <person name="Peeters N.M."/>
            <person name="Zaepfel M."/>
            <person name="Marechal-Drouard L."/>
            <person name="Small I.D."/>
        </authorList>
    </citation>
    <scope>SUBCELLULAR LOCATION</scope>
</reference>
<gene>
    <name evidence="6" type="primary">OVA5</name>
    <name evidence="8" type="ordered locus">At3g13490</name>
</gene>
<comment type="function">
    <text evidence="1">Catalyzes the specific attachment of an amino acid to its cognate tRNA in a 2 step reaction: the amino acid (AA) is first activated by ATP to form AA-AMP and then transferred to the acceptor end of the tRNA.</text>
</comment>
<comment type="catalytic activity">
    <reaction evidence="7">
        <text>tRNA(Lys) + L-lysine + ATP = L-lysyl-tRNA(Lys) + AMP + diphosphate</text>
        <dbReference type="Rhea" id="RHEA:20792"/>
        <dbReference type="Rhea" id="RHEA-COMP:9696"/>
        <dbReference type="Rhea" id="RHEA-COMP:9697"/>
        <dbReference type="ChEBI" id="CHEBI:30616"/>
        <dbReference type="ChEBI" id="CHEBI:32551"/>
        <dbReference type="ChEBI" id="CHEBI:33019"/>
        <dbReference type="ChEBI" id="CHEBI:78442"/>
        <dbReference type="ChEBI" id="CHEBI:78529"/>
        <dbReference type="ChEBI" id="CHEBI:456215"/>
        <dbReference type="EC" id="6.1.1.6"/>
    </reaction>
</comment>
<comment type="cofactor">
    <cofactor evidence="1">
        <name>Ca(2+)</name>
        <dbReference type="ChEBI" id="CHEBI:29108"/>
    </cofactor>
</comment>
<comment type="subcellular location">
    <subcellularLocation>
        <location evidence="4">Plastid</location>
        <location evidence="4">Chloroplast</location>
    </subcellularLocation>
    <subcellularLocation>
        <location evidence="4">Mitochondrion</location>
    </subcellularLocation>
</comment>
<comment type="disruption phenotype">
    <text evidence="5">Lethal. In heterozygous plants, aborted ovules.</text>
</comment>
<comment type="similarity">
    <text evidence="7">Belongs to the class-II aminoacyl-tRNA synthetase family.</text>
</comment>
<proteinExistence type="evidence at transcript level"/>
<dbReference type="EC" id="6.1.1.6" evidence="7"/>
<dbReference type="EMBL" id="AP000603">
    <property type="protein sequence ID" value="BAB01756.1"/>
    <property type="molecule type" value="Genomic_DNA"/>
</dbReference>
<dbReference type="EMBL" id="CP002686">
    <property type="protein sequence ID" value="AEE75364.1"/>
    <property type="molecule type" value="Genomic_DNA"/>
</dbReference>
<dbReference type="EMBL" id="BT002317">
    <property type="protein sequence ID" value="AAN86150.1"/>
    <property type="molecule type" value="mRNA"/>
</dbReference>
<dbReference type="RefSeq" id="NP_187958.1">
    <property type="nucleotide sequence ID" value="NM_112195.3"/>
</dbReference>
<dbReference type="SMR" id="Q9LJE2"/>
<dbReference type="FunCoup" id="Q9LJE2">
    <property type="interactions" value="951"/>
</dbReference>
<dbReference type="IntAct" id="Q9LJE2">
    <property type="interactions" value="1"/>
</dbReference>
<dbReference type="STRING" id="3702.Q9LJE2"/>
<dbReference type="PaxDb" id="3702-AT3G13490.1"/>
<dbReference type="ProteomicsDB" id="234103"/>
<dbReference type="EnsemblPlants" id="AT3G13490.1">
    <property type="protein sequence ID" value="AT3G13490.1"/>
    <property type="gene ID" value="AT3G13490"/>
</dbReference>
<dbReference type="GeneID" id="820551"/>
<dbReference type="Gramene" id="AT3G13490.1">
    <property type="protein sequence ID" value="AT3G13490.1"/>
    <property type="gene ID" value="AT3G13490"/>
</dbReference>
<dbReference type="KEGG" id="ath:AT3G13490"/>
<dbReference type="Araport" id="AT3G13490"/>
<dbReference type="TAIR" id="AT3G13490">
    <property type="gene designation" value="OVA5"/>
</dbReference>
<dbReference type="eggNOG" id="KOG1885">
    <property type="taxonomic scope" value="Eukaryota"/>
</dbReference>
<dbReference type="HOGENOM" id="CLU_008255_6_0_1"/>
<dbReference type="InParanoid" id="Q9LJE2"/>
<dbReference type="OMA" id="WESTHHA"/>
<dbReference type="PhylomeDB" id="Q9LJE2"/>
<dbReference type="PRO" id="PR:Q9LJE2"/>
<dbReference type="Proteomes" id="UP000006548">
    <property type="component" value="Chromosome 3"/>
</dbReference>
<dbReference type="ExpressionAtlas" id="Q9LJE2">
    <property type="expression patterns" value="baseline and differential"/>
</dbReference>
<dbReference type="GO" id="GO:0009507">
    <property type="term" value="C:chloroplast"/>
    <property type="evidence" value="ECO:0000314"/>
    <property type="project" value="TAIR"/>
</dbReference>
<dbReference type="GO" id="GO:0005739">
    <property type="term" value="C:mitochondrion"/>
    <property type="evidence" value="ECO:0000314"/>
    <property type="project" value="TAIR"/>
</dbReference>
<dbReference type="GO" id="GO:0005524">
    <property type="term" value="F:ATP binding"/>
    <property type="evidence" value="ECO:0007669"/>
    <property type="project" value="UniProtKB-KW"/>
</dbReference>
<dbReference type="GO" id="GO:0003677">
    <property type="term" value="F:DNA binding"/>
    <property type="evidence" value="ECO:0007669"/>
    <property type="project" value="UniProtKB-KW"/>
</dbReference>
<dbReference type="GO" id="GO:0004824">
    <property type="term" value="F:lysine-tRNA ligase activity"/>
    <property type="evidence" value="ECO:0007669"/>
    <property type="project" value="UniProtKB-EC"/>
</dbReference>
<dbReference type="GO" id="GO:0046872">
    <property type="term" value="F:metal ion binding"/>
    <property type="evidence" value="ECO:0007669"/>
    <property type="project" value="UniProtKB-KW"/>
</dbReference>
<dbReference type="GO" id="GO:0003729">
    <property type="term" value="F:mRNA binding"/>
    <property type="evidence" value="ECO:0000314"/>
    <property type="project" value="TAIR"/>
</dbReference>
<dbReference type="GO" id="GO:0006430">
    <property type="term" value="P:lysyl-tRNA aminoacylation"/>
    <property type="evidence" value="ECO:0007669"/>
    <property type="project" value="InterPro"/>
</dbReference>
<dbReference type="GO" id="GO:0048481">
    <property type="term" value="P:plant ovule development"/>
    <property type="evidence" value="ECO:0000315"/>
    <property type="project" value="TAIR"/>
</dbReference>
<dbReference type="CDD" id="cd00775">
    <property type="entry name" value="LysRS_core"/>
    <property type="match status" value="1"/>
</dbReference>
<dbReference type="CDD" id="cd04322">
    <property type="entry name" value="LysRS_N"/>
    <property type="match status" value="1"/>
</dbReference>
<dbReference type="FunFam" id="2.40.50.140:FF:000024">
    <property type="entry name" value="Lysine--tRNA ligase"/>
    <property type="match status" value="1"/>
</dbReference>
<dbReference type="FunFam" id="3.30.930.10:FF:000067">
    <property type="entry name" value="Lysine--tRNA ligase"/>
    <property type="match status" value="1"/>
</dbReference>
<dbReference type="Gene3D" id="3.30.930.10">
    <property type="entry name" value="Bira Bifunctional Protein, Domain 2"/>
    <property type="match status" value="1"/>
</dbReference>
<dbReference type="Gene3D" id="2.40.50.140">
    <property type="entry name" value="Nucleic acid-binding proteins"/>
    <property type="match status" value="1"/>
</dbReference>
<dbReference type="HAMAP" id="MF_00252">
    <property type="entry name" value="Lys_tRNA_synth_class2"/>
    <property type="match status" value="1"/>
</dbReference>
<dbReference type="InterPro" id="IPR004364">
    <property type="entry name" value="Aa-tRNA-synt_II"/>
</dbReference>
<dbReference type="InterPro" id="IPR006195">
    <property type="entry name" value="aa-tRNA-synth_II"/>
</dbReference>
<dbReference type="InterPro" id="IPR045864">
    <property type="entry name" value="aa-tRNA-synth_II/BPL/LPL"/>
</dbReference>
<dbReference type="InterPro" id="IPR002313">
    <property type="entry name" value="Lys-tRNA-ligase_II"/>
</dbReference>
<dbReference type="InterPro" id="IPR044136">
    <property type="entry name" value="Lys-tRNA-ligase_II_N"/>
</dbReference>
<dbReference type="InterPro" id="IPR018149">
    <property type="entry name" value="Lys-tRNA-synth_II_C"/>
</dbReference>
<dbReference type="InterPro" id="IPR012340">
    <property type="entry name" value="NA-bd_OB-fold"/>
</dbReference>
<dbReference type="InterPro" id="IPR004365">
    <property type="entry name" value="NA-bd_OB_tRNA"/>
</dbReference>
<dbReference type="NCBIfam" id="TIGR00499">
    <property type="entry name" value="lysS_bact"/>
    <property type="match status" value="1"/>
</dbReference>
<dbReference type="NCBIfam" id="NF001756">
    <property type="entry name" value="PRK00484.1"/>
    <property type="match status" value="1"/>
</dbReference>
<dbReference type="PANTHER" id="PTHR42918:SF15">
    <property type="entry name" value="LYSINE--TRNA LIGASE, CHLOROPLASTIC_MITOCHONDRIAL"/>
    <property type="match status" value="1"/>
</dbReference>
<dbReference type="PANTHER" id="PTHR42918">
    <property type="entry name" value="LYSYL-TRNA SYNTHETASE"/>
    <property type="match status" value="1"/>
</dbReference>
<dbReference type="Pfam" id="PF00152">
    <property type="entry name" value="tRNA-synt_2"/>
    <property type="match status" value="1"/>
</dbReference>
<dbReference type="Pfam" id="PF01336">
    <property type="entry name" value="tRNA_anti-codon"/>
    <property type="match status" value="1"/>
</dbReference>
<dbReference type="PRINTS" id="PR00982">
    <property type="entry name" value="TRNASYNTHLYS"/>
</dbReference>
<dbReference type="SUPFAM" id="SSF55681">
    <property type="entry name" value="Class II aaRS and biotin synthetases"/>
    <property type="match status" value="1"/>
</dbReference>
<dbReference type="SUPFAM" id="SSF50249">
    <property type="entry name" value="Nucleic acid-binding proteins"/>
    <property type="match status" value="1"/>
</dbReference>
<dbReference type="PROSITE" id="PS50862">
    <property type="entry name" value="AA_TRNA_LIGASE_II"/>
    <property type="match status" value="1"/>
</dbReference>
<keyword id="KW-0030">Aminoacyl-tRNA synthetase</keyword>
<keyword id="KW-0067">ATP-binding</keyword>
<keyword id="KW-0106">Calcium</keyword>
<keyword id="KW-0150">Chloroplast</keyword>
<keyword id="KW-0238">DNA-binding</keyword>
<keyword id="KW-0436">Ligase</keyword>
<keyword id="KW-0479">Metal-binding</keyword>
<keyword id="KW-0496">Mitochondrion</keyword>
<keyword id="KW-0547">Nucleotide-binding</keyword>
<keyword id="KW-0934">Plastid</keyword>
<keyword id="KW-0648">Protein biosynthesis</keyword>
<keyword id="KW-1185">Reference proteome</keyword>
<keyword id="KW-0809">Transit peptide</keyword>
<sequence>MEALKVWSLTATPLKQLLRLSSSSTRLATTIYGRRSYHLSPALRCASAASSSSSSATTAETSKPSGRNRRSASSSNSTSDREAIRSIRLKKVEELRGQGLEPYAYKWEKSHSANQLQEIYKHLANGEESDNEIDCVSIAGRVVARRAFGKLAFLTLRDDSGTIQLYCEKERLSDDQFEQLKQFIDIGDILGASGSMKRTEKGELSICVNSFSILTKSLLPLPDKYHGLTDIDKRYRQRYVDMIANPEVADVFRRRAKIVSEIRKTVESFGYLEVETPVLQGAAGGAEARPFVTFHNSLGRDLYLRIATELHLKRMLVGGFEKVYEIGRIFRNEGISTRHNPEFTTIEMYEAYSDYHSMMDMAELIVTQCSMAVNGKLTIDYQGTEICLERPWRRETMHNLVKEITGINFSELGEDLGNAKDTVLLALQDVLEPKDKSGIRACSSLGHLLNEIFEVVVEPKLVQPTFVLDYPIEISPLAKPHRGNAGLTERFELFICGREMANAFSELTDPVDQRTRLEEQVRQHNAKRAEAVRESPEPNAKKDDDDDESYEVTLDEDFLTALEYGMPPASGMGLGIDRLVMLLTNSASIRDVIAFPVLKLQQ</sequence>
<organism>
    <name type="scientific">Arabidopsis thaliana</name>
    <name type="common">Mouse-ear cress</name>
    <dbReference type="NCBI Taxonomy" id="3702"/>
    <lineage>
        <taxon>Eukaryota</taxon>
        <taxon>Viridiplantae</taxon>
        <taxon>Streptophyta</taxon>
        <taxon>Embryophyta</taxon>
        <taxon>Tracheophyta</taxon>
        <taxon>Spermatophyta</taxon>
        <taxon>Magnoliopsida</taxon>
        <taxon>eudicotyledons</taxon>
        <taxon>Gunneridae</taxon>
        <taxon>Pentapetalae</taxon>
        <taxon>rosids</taxon>
        <taxon>malvids</taxon>
        <taxon>Brassicales</taxon>
        <taxon>Brassicaceae</taxon>
        <taxon>Camelineae</taxon>
        <taxon>Arabidopsis</taxon>
    </lineage>
</organism>
<name>SYKM_ARATH</name>